<keyword id="KW-0030">Aminoacyl-tRNA synthetase</keyword>
<keyword id="KW-0067">ATP-binding</keyword>
<keyword id="KW-0963">Cytoplasm</keyword>
<keyword id="KW-0436">Ligase</keyword>
<keyword id="KW-0547">Nucleotide-binding</keyword>
<keyword id="KW-0648">Protein biosynthesis</keyword>
<keyword id="KW-1185">Reference proteome</keyword>
<name>SYS_DESAP</name>
<reference key="1">
    <citation type="submission" date="2007-10" db="EMBL/GenBank/DDBJ databases">
        <title>Complete sequence of chromosome of Desulforudis audaxviator MP104C.</title>
        <authorList>
            <person name="Copeland A."/>
            <person name="Lucas S."/>
            <person name="Lapidus A."/>
            <person name="Barry K."/>
            <person name="Glavina del Rio T."/>
            <person name="Dalin E."/>
            <person name="Tice H."/>
            <person name="Bruce D."/>
            <person name="Pitluck S."/>
            <person name="Lowry S.R."/>
            <person name="Larimer F."/>
            <person name="Land M.L."/>
            <person name="Hauser L."/>
            <person name="Kyrpides N."/>
            <person name="Ivanova N.N."/>
            <person name="Richardson P."/>
        </authorList>
    </citation>
    <scope>NUCLEOTIDE SEQUENCE [LARGE SCALE GENOMIC DNA]</scope>
    <source>
        <strain>MP104C</strain>
    </source>
</reference>
<feature type="chain" id="PRO_1000098060" description="Serine--tRNA ligase">
    <location>
        <begin position="1"/>
        <end position="425"/>
    </location>
</feature>
<feature type="binding site" evidence="1">
    <location>
        <begin position="230"/>
        <end position="232"/>
    </location>
    <ligand>
        <name>L-serine</name>
        <dbReference type="ChEBI" id="CHEBI:33384"/>
    </ligand>
</feature>
<feature type="binding site" evidence="1">
    <location>
        <begin position="261"/>
        <end position="263"/>
    </location>
    <ligand>
        <name>ATP</name>
        <dbReference type="ChEBI" id="CHEBI:30616"/>
    </ligand>
</feature>
<feature type="binding site" evidence="1">
    <location>
        <position position="284"/>
    </location>
    <ligand>
        <name>L-serine</name>
        <dbReference type="ChEBI" id="CHEBI:33384"/>
    </ligand>
</feature>
<feature type="binding site" evidence="1">
    <location>
        <begin position="348"/>
        <end position="351"/>
    </location>
    <ligand>
        <name>ATP</name>
        <dbReference type="ChEBI" id="CHEBI:30616"/>
    </ligand>
</feature>
<feature type="binding site" evidence="1">
    <location>
        <position position="384"/>
    </location>
    <ligand>
        <name>L-serine</name>
        <dbReference type="ChEBI" id="CHEBI:33384"/>
    </ligand>
</feature>
<evidence type="ECO:0000255" key="1">
    <source>
        <dbReference type="HAMAP-Rule" id="MF_00176"/>
    </source>
</evidence>
<dbReference type="EC" id="6.1.1.11" evidence="1"/>
<dbReference type="EMBL" id="CP000860">
    <property type="protein sequence ID" value="ACA58582.1"/>
    <property type="molecule type" value="Genomic_DNA"/>
</dbReference>
<dbReference type="RefSeq" id="WP_012301176.1">
    <property type="nucleotide sequence ID" value="NC_010424.1"/>
</dbReference>
<dbReference type="SMR" id="B1I161"/>
<dbReference type="STRING" id="477974.Daud_0013"/>
<dbReference type="KEGG" id="dau:Daud_0013"/>
<dbReference type="eggNOG" id="COG0172">
    <property type="taxonomic scope" value="Bacteria"/>
</dbReference>
<dbReference type="HOGENOM" id="CLU_023797_1_1_9"/>
<dbReference type="OrthoDB" id="9804647at2"/>
<dbReference type="UniPathway" id="UPA00906">
    <property type="reaction ID" value="UER00895"/>
</dbReference>
<dbReference type="Proteomes" id="UP000008544">
    <property type="component" value="Chromosome"/>
</dbReference>
<dbReference type="GO" id="GO:0005737">
    <property type="term" value="C:cytoplasm"/>
    <property type="evidence" value="ECO:0007669"/>
    <property type="project" value="UniProtKB-SubCell"/>
</dbReference>
<dbReference type="GO" id="GO:0005524">
    <property type="term" value="F:ATP binding"/>
    <property type="evidence" value="ECO:0007669"/>
    <property type="project" value="UniProtKB-UniRule"/>
</dbReference>
<dbReference type="GO" id="GO:0140096">
    <property type="term" value="F:catalytic activity, acting on a protein"/>
    <property type="evidence" value="ECO:0007669"/>
    <property type="project" value="UniProtKB-ARBA"/>
</dbReference>
<dbReference type="GO" id="GO:0004828">
    <property type="term" value="F:serine-tRNA ligase activity"/>
    <property type="evidence" value="ECO:0007669"/>
    <property type="project" value="UniProtKB-UniRule"/>
</dbReference>
<dbReference type="GO" id="GO:0016740">
    <property type="term" value="F:transferase activity"/>
    <property type="evidence" value="ECO:0007669"/>
    <property type="project" value="UniProtKB-ARBA"/>
</dbReference>
<dbReference type="GO" id="GO:0016260">
    <property type="term" value="P:selenocysteine biosynthetic process"/>
    <property type="evidence" value="ECO:0007669"/>
    <property type="project" value="UniProtKB-UniRule"/>
</dbReference>
<dbReference type="GO" id="GO:0006434">
    <property type="term" value="P:seryl-tRNA aminoacylation"/>
    <property type="evidence" value="ECO:0007669"/>
    <property type="project" value="UniProtKB-UniRule"/>
</dbReference>
<dbReference type="CDD" id="cd00770">
    <property type="entry name" value="SerRS_core"/>
    <property type="match status" value="1"/>
</dbReference>
<dbReference type="Gene3D" id="3.30.930.10">
    <property type="entry name" value="Bira Bifunctional Protein, Domain 2"/>
    <property type="match status" value="1"/>
</dbReference>
<dbReference type="Gene3D" id="1.10.287.40">
    <property type="entry name" value="Serine-tRNA synthetase, tRNA binding domain"/>
    <property type="match status" value="1"/>
</dbReference>
<dbReference type="HAMAP" id="MF_00176">
    <property type="entry name" value="Ser_tRNA_synth_type1"/>
    <property type="match status" value="1"/>
</dbReference>
<dbReference type="InterPro" id="IPR002314">
    <property type="entry name" value="aa-tRNA-synt_IIb"/>
</dbReference>
<dbReference type="InterPro" id="IPR006195">
    <property type="entry name" value="aa-tRNA-synth_II"/>
</dbReference>
<dbReference type="InterPro" id="IPR045864">
    <property type="entry name" value="aa-tRNA-synth_II/BPL/LPL"/>
</dbReference>
<dbReference type="InterPro" id="IPR002317">
    <property type="entry name" value="Ser-tRNA-ligase_type_1"/>
</dbReference>
<dbReference type="InterPro" id="IPR015866">
    <property type="entry name" value="Ser-tRNA-synth_1_N"/>
</dbReference>
<dbReference type="InterPro" id="IPR042103">
    <property type="entry name" value="SerRS_1_N_sf"/>
</dbReference>
<dbReference type="InterPro" id="IPR033729">
    <property type="entry name" value="SerRS_core"/>
</dbReference>
<dbReference type="InterPro" id="IPR010978">
    <property type="entry name" value="tRNA-bd_arm"/>
</dbReference>
<dbReference type="NCBIfam" id="TIGR00414">
    <property type="entry name" value="serS"/>
    <property type="match status" value="1"/>
</dbReference>
<dbReference type="PANTHER" id="PTHR43697:SF1">
    <property type="entry name" value="SERINE--TRNA LIGASE"/>
    <property type="match status" value="1"/>
</dbReference>
<dbReference type="PANTHER" id="PTHR43697">
    <property type="entry name" value="SERYL-TRNA SYNTHETASE"/>
    <property type="match status" value="1"/>
</dbReference>
<dbReference type="Pfam" id="PF02403">
    <property type="entry name" value="Seryl_tRNA_N"/>
    <property type="match status" value="1"/>
</dbReference>
<dbReference type="Pfam" id="PF00587">
    <property type="entry name" value="tRNA-synt_2b"/>
    <property type="match status" value="1"/>
</dbReference>
<dbReference type="PIRSF" id="PIRSF001529">
    <property type="entry name" value="Ser-tRNA-synth_IIa"/>
    <property type="match status" value="1"/>
</dbReference>
<dbReference type="PRINTS" id="PR00981">
    <property type="entry name" value="TRNASYNTHSER"/>
</dbReference>
<dbReference type="SUPFAM" id="SSF55681">
    <property type="entry name" value="Class II aaRS and biotin synthetases"/>
    <property type="match status" value="1"/>
</dbReference>
<dbReference type="SUPFAM" id="SSF46589">
    <property type="entry name" value="tRNA-binding arm"/>
    <property type="match status" value="1"/>
</dbReference>
<dbReference type="PROSITE" id="PS50862">
    <property type="entry name" value="AA_TRNA_LIGASE_II"/>
    <property type="match status" value="1"/>
</dbReference>
<proteinExistence type="inferred from homology"/>
<organism>
    <name type="scientific">Desulforudis audaxviator (strain MP104C)</name>
    <dbReference type="NCBI Taxonomy" id="477974"/>
    <lineage>
        <taxon>Bacteria</taxon>
        <taxon>Bacillati</taxon>
        <taxon>Bacillota</taxon>
        <taxon>Clostridia</taxon>
        <taxon>Thermoanaerobacterales</taxon>
        <taxon>Candidatus Desulforudaceae</taxon>
        <taxon>Candidatus Desulforudis</taxon>
    </lineage>
</organism>
<comment type="function">
    <text evidence="1">Catalyzes the attachment of serine to tRNA(Ser). Is also able to aminoacylate tRNA(Sec) with serine, to form the misacylated tRNA L-seryl-tRNA(Sec), which will be further converted into selenocysteinyl-tRNA(Sec).</text>
</comment>
<comment type="catalytic activity">
    <reaction evidence="1">
        <text>tRNA(Ser) + L-serine + ATP = L-seryl-tRNA(Ser) + AMP + diphosphate + H(+)</text>
        <dbReference type="Rhea" id="RHEA:12292"/>
        <dbReference type="Rhea" id="RHEA-COMP:9669"/>
        <dbReference type="Rhea" id="RHEA-COMP:9703"/>
        <dbReference type="ChEBI" id="CHEBI:15378"/>
        <dbReference type="ChEBI" id="CHEBI:30616"/>
        <dbReference type="ChEBI" id="CHEBI:33019"/>
        <dbReference type="ChEBI" id="CHEBI:33384"/>
        <dbReference type="ChEBI" id="CHEBI:78442"/>
        <dbReference type="ChEBI" id="CHEBI:78533"/>
        <dbReference type="ChEBI" id="CHEBI:456215"/>
        <dbReference type="EC" id="6.1.1.11"/>
    </reaction>
</comment>
<comment type="catalytic activity">
    <reaction evidence="1">
        <text>tRNA(Sec) + L-serine + ATP = L-seryl-tRNA(Sec) + AMP + diphosphate + H(+)</text>
        <dbReference type="Rhea" id="RHEA:42580"/>
        <dbReference type="Rhea" id="RHEA-COMP:9742"/>
        <dbReference type="Rhea" id="RHEA-COMP:10128"/>
        <dbReference type="ChEBI" id="CHEBI:15378"/>
        <dbReference type="ChEBI" id="CHEBI:30616"/>
        <dbReference type="ChEBI" id="CHEBI:33019"/>
        <dbReference type="ChEBI" id="CHEBI:33384"/>
        <dbReference type="ChEBI" id="CHEBI:78442"/>
        <dbReference type="ChEBI" id="CHEBI:78533"/>
        <dbReference type="ChEBI" id="CHEBI:456215"/>
        <dbReference type="EC" id="6.1.1.11"/>
    </reaction>
</comment>
<comment type="pathway">
    <text evidence="1">Aminoacyl-tRNA biosynthesis; selenocysteinyl-tRNA(Sec) biosynthesis; L-seryl-tRNA(Sec) from L-serine and tRNA(Sec): step 1/1.</text>
</comment>
<comment type="subunit">
    <text evidence="1">Homodimer. The tRNA molecule binds across the dimer.</text>
</comment>
<comment type="subcellular location">
    <subcellularLocation>
        <location evidence="1">Cytoplasm</location>
    </subcellularLocation>
</comment>
<comment type="domain">
    <text evidence="1">Consists of two distinct domains, a catalytic core and a N-terminal extension that is involved in tRNA binding.</text>
</comment>
<comment type="similarity">
    <text evidence="1">Belongs to the class-II aminoacyl-tRNA synthetase family. Type-1 seryl-tRNA synthetase subfamily.</text>
</comment>
<accession>B1I161</accession>
<protein>
    <recommendedName>
        <fullName evidence="1">Serine--tRNA ligase</fullName>
        <ecNumber evidence="1">6.1.1.11</ecNumber>
    </recommendedName>
    <alternativeName>
        <fullName evidence="1">Seryl-tRNA synthetase</fullName>
        <shortName evidence="1">SerRS</shortName>
    </alternativeName>
    <alternativeName>
        <fullName evidence="1">Seryl-tRNA(Ser/Sec) synthetase</fullName>
    </alternativeName>
</protein>
<sequence>MLDLKFIRKHPEAVRMALEKRGAEFDLDRLLDLDDEWRQKLFTVERLKNRRNAVSEEIARLKKAGEPAEELIAEMRNVSQQIRELDGEIRQVEENLQALLLQVPNIPHPLVPFGRADTDNEEVRRWGEPPAFGFEPRPHWELGEELNILDFARGGKVSGARFSFCRGAGARLERALICFMLDLHVDRHGYTELFPPFLVNAQSMTGTGQLPKFAADMYKVENEDYYLVPTAEVPVTNYLRDEILDGDTLPRKYAAYSACFRAEAGAAGRDTRGLIRQHQFNKVELVKFTRPEDSEDELEKLVRDAEEVLRLLRLPYRVVLLCTGDLGFSSSRTYDLEVWMPGQGVYREISSCSNFTDFQARRANIRYRAHPRAKADFVHTLNGSGLAVGRTLAAVLENFQQADGTVTVPEVLRPYMGGMERITRK</sequence>
<gene>
    <name evidence="1" type="primary">serS</name>
    <name type="ordered locus">Daud_0013</name>
</gene>